<gene>
    <name evidence="1" type="primary">rplP</name>
    <name type="ordered locus">c4079</name>
</gene>
<accession>P0ADY8</accession>
<accession>P02414</accession>
<keyword id="KW-1185">Reference proteome</keyword>
<keyword id="KW-0687">Ribonucleoprotein</keyword>
<keyword id="KW-0689">Ribosomal protein</keyword>
<keyword id="KW-0694">RNA-binding</keyword>
<keyword id="KW-0699">rRNA-binding</keyword>
<keyword id="KW-0820">tRNA-binding</keyword>
<feature type="chain" id="PRO_0000062103" description="Large ribosomal subunit protein uL16">
    <location>
        <begin position="1"/>
        <end position="136"/>
    </location>
</feature>
<sequence length="136" mass="15281">MLQPKRTKFRKMHKGRNRGLAQGTDVSFGSFGLKAVGRGRLTARQIEAARRAMTRAVKRQGKIWIRVFPDKPITEKPLAVRMGKGKGNVEYWVALIQPGKVLYEMDGVPEELAREAFKLAAAKLPIKTTFVTKTVM</sequence>
<name>RL16_ECOL6</name>
<evidence type="ECO:0000255" key="1">
    <source>
        <dbReference type="HAMAP-Rule" id="MF_01342"/>
    </source>
</evidence>
<evidence type="ECO:0000305" key="2"/>
<comment type="function">
    <text evidence="1">Binds 23S rRNA and is also seen to make contacts with the A and possibly P site tRNAs.</text>
</comment>
<comment type="subunit">
    <text evidence="1">Part of the 50S ribosomal subunit.</text>
</comment>
<comment type="similarity">
    <text evidence="1">Belongs to the universal ribosomal protein uL16 family.</text>
</comment>
<reference key="1">
    <citation type="journal article" date="2002" name="Proc. Natl. Acad. Sci. U.S.A.">
        <title>Extensive mosaic structure revealed by the complete genome sequence of uropathogenic Escherichia coli.</title>
        <authorList>
            <person name="Welch R.A."/>
            <person name="Burland V."/>
            <person name="Plunkett G. III"/>
            <person name="Redford P."/>
            <person name="Roesch P."/>
            <person name="Rasko D."/>
            <person name="Buckles E.L."/>
            <person name="Liou S.-R."/>
            <person name="Boutin A."/>
            <person name="Hackett J."/>
            <person name="Stroud D."/>
            <person name="Mayhew G.F."/>
            <person name="Rose D.J."/>
            <person name="Zhou S."/>
            <person name="Schwartz D.C."/>
            <person name="Perna N.T."/>
            <person name="Mobley H.L.T."/>
            <person name="Donnenberg M.S."/>
            <person name="Blattner F.R."/>
        </authorList>
    </citation>
    <scope>NUCLEOTIDE SEQUENCE [LARGE SCALE GENOMIC DNA]</scope>
    <source>
        <strain>CFT073 / ATCC 700928 / UPEC</strain>
    </source>
</reference>
<organism>
    <name type="scientific">Escherichia coli O6:H1 (strain CFT073 / ATCC 700928 / UPEC)</name>
    <dbReference type="NCBI Taxonomy" id="199310"/>
    <lineage>
        <taxon>Bacteria</taxon>
        <taxon>Pseudomonadati</taxon>
        <taxon>Pseudomonadota</taxon>
        <taxon>Gammaproteobacteria</taxon>
        <taxon>Enterobacterales</taxon>
        <taxon>Enterobacteriaceae</taxon>
        <taxon>Escherichia</taxon>
    </lineage>
</organism>
<protein>
    <recommendedName>
        <fullName evidence="1">Large ribosomal subunit protein uL16</fullName>
    </recommendedName>
    <alternativeName>
        <fullName evidence="2">50S ribosomal protein L16</fullName>
    </alternativeName>
</protein>
<proteinExistence type="inferred from homology"/>
<dbReference type="EMBL" id="AE014075">
    <property type="protein sequence ID" value="AAN82517.1"/>
    <property type="molecule type" value="Genomic_DNA"/>
</dbReference>
<dbReference type="RefSeq" id="WP_000941212.1">
    <property type="nucleotide sequence ID" value="NZ_CP051263.1"/>
</dbReference>
<dbReference type="SMR" id="P0ADY8"/>
<dbReference type="STRING" id="199310.c4079"/>
<dbReference type="GeneID" id="93778674"/>
<dbReference type="KEGG" id="ecc:c4079"/>
<dbReference type="eggNOG" id="COG0197">
    <property type="taxonomic scope" value="Bacteria"/>
</dbReference>
<dbReference type="HOGENOM" id="CLU_078858_2_1_6"/>
<dbReference type="BioCyc" id="ECOL199310:C4079-MONOMER"/>
<dbReference type="Proteomes" id="UP000001410">
    <property type="component" value="Chromosome"/>
</dbReference>
<dbReference type="GO" id="GO:0022625">
    <property type="term" value="C:cytosolic large ribosomal subunit"/>
    <property type="evidence" value="ECO:0007669"/>
    <property type="project" value="TreeGrafter"/>
</dbReference>
<dbReference type="GO" id="GO:0019843">
    <property type="term" value="F:rRNA binding"/>
    <property type="evidence" value="ECO:0007669"/>
    <property type="project" value="UniProtKB-UniRule"/>
</dbReference>
<dbReference type="GO" id="GO:0003735">
    <property type="term" value="F:structural constituent of ribosome"/>
    <property type="evidence" value="ECO:0007669"/>
    <property type="project" value="InterPro"/>
</dbReference>
<dbReference type="GO" id="GO:0000049">
    <property type="term" value="F:tRNA binding"/>
    <property type="evidence" value="ECO:0007669"/>
    <property type="project" value="UniProtKB-KW"/>
</dbReference>
<dbReference type="GO" id="GO:0006412">
    <property type="term" value="P:translation"/>
    <property type="evidence" value="ECO:0007669"/>
    <property type="project" value="UniProtKB-UniRule"/>
</dbReference>
<dbReference type="CDD" id="cd01433">
    <property type="entry name" value="Ribosomal_L16_L10e"/>
    <property type="match status" value="1"/>
</dbReference>
<dbReference type="FunFam" id="3.90.1170.10:FF:000001">
    <property type="entry name" value="50S ribosomal protein L16"/>
    <property type="match status" value="1"/>
</dbReference>
<dbReference type="Gene3D" id="3.90.1170.10">
    <property type="entry name" value="Ribosomal protein L10e/L16"/>
    <property type="match status" value="1"/>
</dbReference>
<dbReference type="HAMAP" id="MF_01342">
    <property type="entry name" value="Ribosomal_uL16"/>
    <property type="match status" value="1"/>
</dbReference>
<dbReference type="InterPro" id="IPR047873">
    <property type="entry name" value="Ribosomal_uL16"/>
</dbReference>
<dbReference type="InterPro" id="IPR000114">
    <property type="entry name" value="Ribosomal_uL16_bact-type"/>
</dbReference>
<dbReference type="InterPro" id="IPR020798">
    <property type="entry name" value="Ribosomal_uL16_CS"/>
</dbReference>
<dbReference type="InterPro" id="IPR016180">
    <property type="entry name" value="Ribosomal_uL16_dom"/>
</dbReference>
<dbReference type="InterPro" id="IPR036920">
    <property type="entry name" value="Ribosomal_uL16_sf"/>
</dbReference>
<dbReference type="NCBIfam" id="TIGR01164">
    <property type="entry name" value="rplP_bact"/>
    <property type="match status" value="1"/>
</dbReference>
<dbReference type="PANTHER" id="PTHR12220">
    <property type="entry name" value="50S/60S RIBOSOMAL PROTEIN L16"/>
    <property type="match status" value="1"/>
</dbReference>
<dbReference type="PANTHER" id="PTHR12220:SF13">
    <property type="entry name" value="LARGE RIBOSOMAL SUBUNIT PROTEIN UL16M"/>
    <property type="match status" value="1"/>
</dbReference>
<dbReference type="Pfam" id="PF00252">
    <property type="entry name" value="Ribosomal_L16"/>
    <property type="match status" value="1"/>
</dbReference>
<dbReference type="PRINTS" id="PR00060">
    <property type="entry name" value="RIBOSOMALL16"/>
</dbReference>
<dbReference type="SUPFAM" id="SSF54686">
    <property type="entry name" value="Ribosomal protein L16p/L10e"/>
    <property type="match status" value="1"/>
</dbReference>
<dbReference type="PROSITE" id="PS00586">
    <property type="entry name" value="RIBOSOMAL_L16_1"/>
    <property type="match status" value="1"/>
</dbReference>
<dbReference type="PROSITE" id="PS00701">
    <property type="entry name" value="RIBOSOMAL_L16_2"/>
    <property type="match status" value="1"/>
</dbReference>